<evidence type="ECO:0000255" key="1">
    <source>
        <dbReference type="HAMAP-Rule" id="MF_01208"/>
    </source>
</evidence>
<proteinExistence type="inferred from homology"/>
<gene>
    <name evidence="1" type="primary">pyrE</name>
    <name type="ordered locus">NT01EI_0050</name>
</gene>
<protein>
    <recommendedName>
        <fullName evidence="1">Orotate phosphoribosyltransferase</fullName>
        <shortName evidence="1">OPRT</shortName>
        <shortName evidence="1">OPRTase</shortName>
        <ecNumber evidence="1">2.4.2.10</ecNumber>
    </recommendedName>
</protein>
<accession>C5B9D0</accession>
<comment type="function">
    <text evidence="1">Catalyzes the transfer of a ribosyl phosphate group from 5-phosphoribose 1-diphosphate to orotate, leading to the formation of orotidine monophosphate (OMP).</text>
</comment>
<comment type="catalytic activity">
    <reaction evidence="1">
        <text>orotidine 5'-phosphate + diphosphate = orotate + 5-phospho-alpha-D-ribose 1-diphosphate</text>
        <dbReference type="Rhea" id="RHEA:10380"/>
        <dbReference type="ChEBI" id="CHEBI:30839"/>
        <dbReference type="ChEBI" id="CHEBI:33019"/>
        <dbReference type="ChEBI" id="CHEBI:57538"/>
        <dbReference type="ChEBI" id="CHEBI:58017"/>
        <dbReference type="EC" id="2.4.2.10"/>
    </reaction>
</comment>
<comment type="cofactor">
    <cofactor evidence="1">
        <name>Mg(2+)</name>
        <dbReference type="ChEBI" id="CHEBI:18420"/>
    </cofactor>
</comment>
<comment type="pathway">
    <text evidence="1">Pyrimidine metabolism; UMP biosynthesis via de novo pathway; UMP from orotate: step 1/2.</text>
</comment>
<comment type="subunit">
    <text evidence="1">Homodimer.</text>
</comment>
<comment type="similarity">
    <text evidence="1">Belongs to the purine/pyrimidine phosphoribosyltransferase family. PyrE subfamily.</text>
</comment>
<feature type="chain" id="PRO_1000213859" description="Orotate phosphoribosyltransferase">
    <location>
        <begin position="1"/>
        <end position="213"/>
    </location>
</feature>
<feature type="binding site" description="in other chain" evidence="1">
    <location>
        <position position="26"/>
    </location>
    <ligand>
        <name>5-phospho-alpha-D-ribose 1-diphosphate</name>
        <dbReference type="ChEBI" id="CHEBI:58017"/>
        <note>ligand shared between dimeric partners</note>
    </ligand>
</feature>
<feature type="binding site" evidence="1">
    <location>
        <begin position="34"/>
        <end position="35"/>
    </location>
    <ligand>
        <name>orotate</name>
        <dbReference type="ChEBI" id="CHEBI:30839"/>
    </ligand>
</feature>
<feature type="binding site" description="in other chain" evidence="1">
    <location>
        <begin position="72"/>
        <end position="73"/>
    </location>
    <ligand>
        <name>5-phospho-alpha-D-ribose 1-diphosphate</name>
        <dbReference type="ChEBI" id="CHEBI:58017"/>
        <note>ligand shared between dimeric partners</note>
    </ligand>
</feature>
<feature type="binding site" evidence="1">
    <location>
        <position position="99"/>
    </location>
    <ligand>
        <name>5-phospho-alpha-D-ribose 1-diphosphate</name>
        <dbReference type="ChEBI" id="CHEBI:58017"/>
        <note>ligand shared between dimeric partners</note>
    </ligand>
</feature>
<feature type="binding site" description="in other chain" evidence="1">
    <location>
        <position position="100"/>
    </location>
    <ligand>
        <name>5-phospho-alpha-D-ribose 1-diphosphate</name>
        <dbReference type="ChEBI" id="CHEBI:58017"/>
        <note>ligand shared between dimeric partners</note>
    </ligand>
</feature>
<feature type="binding site" evidence="1">
    <location>
        <position position="103"/>
    </location>
    <ligand>
        <name>5-phospho-alpha-D-ribose 1-diphosphate</name>
        <dbReference type="ChEBI" id="CHEBI:58017"/>
        <note>ligand shared between dimeric partners</note>
    </ligand>
</feature>
<feature type="binding site" evidence="1">
    <location>
        <position position="105"/>
    </location>
    <ligand>
        <name>5-phospho-alpha-D-ribose 1-diphosphate</name>
        <dbReference type="ChEBI" id="CHEBI:58017"/>
        <note>ligand shared between dimeric partners</note>
    </ligand>
</feature>
<feature type="binding site" description="in other chain" evidence="1">
    <location>
        <begin position="124"/>
        <end position="132"/>
    </location>
    <ligand>
        <name>5-phospho-alpha-D-ribose 1-diphosphate</name>
        <dbReference type="ChEBI" id="CHEBI:58017"/>
        <note>ligand shared between dimeric partners</note>
    </ligand>
</feature>
<feature type="binding site" evidence="1">
    <location>
        <position position="128"/>
    </location>
    <ligand>
        <name>orotate</name>
        <dbReference type="ChEBI" id="CHEBI:30839"/>
    </ligand>
</feature>
<feature type="binding site" evidence="1">
    <location>
        <position position="156"/>
    </location>
    <ligand>
        <name>orotate</name>
        <dbReference type="ChEBI" id="CHEBI:30839"/>
    </ligand>
</feature>
<organism>
    <name type="scientific">Edwardsiella ictaluri (strain 93-146)</name>
    <dbReference type="NCBI Taxonomy" id="634503"/>
    <lineage>
        <taxon>Bacteria</taxon>
        <taxon>Pseudomonadati</taxon>
        <taxon>Pseudomonadota</taxon>
        <taxon>Gammaproteobacteria</taxon>
        <taxon>Enterobacterales</taxon>
        <taxon>Hafniaceae</taxon>
        <taxon>Edwardsiella</taxon>
    </lineage>
</organism>
<reference key="1">
    <citation type="submission" date="2009-03" db="EMBL/GenBank/DDBJ databases">
        <title>Complete genome sequence of Edwardsiella ictaluri 93-146.</title>
        <authorList>
            <person name="Williams M.L."/>
            <person name="Gillaspy A.F."/>
            <person name="Dyer D.W."/>
            <person name="Thune R.L."/>
            <person name="Waldbieser G.C."/>
            <person name="Schuster S.C."/>
            <person name="Gipson J."/>
            <person name="Zaitshik J."/>
            <person name="Landry C."/>
            <person name="Lawrence M.L."/>
        </authorList>
    </citation>
    <scope>NUCLEOTIDE SEQUENCE [LARGE SCALE GENOMIC DNA]</scope>
    <source>
        <strain>93-146</strain>
    </source>
</reference>
<keyword id="KW-0328">Glycosyltransferase</keyword>
<keyword id="KW-0460">Magnesium</keyword>
<keyword id="KW-0665">Pyrimidine biosynthesis</keyword>
<keyword id="KW-0808">Transferase</keyword>
<name>PYRE_EDWI9</name>
<dbReference type="EC" id="2.4.2.10" evidence="1"/>
<dbReference type="EMBL" id="CP001600">
    <property type="protein sequence ID" value="ACR67310.1"/>
    <property type="molecule type" value="Genomic_DNA"/>
</dbReference>
<dbReference type="RefSeq" id="WP_015869534.1">
    <property type="nucleotide sequence ID" value="NZ_CP169062.1"/>
</dbReference>
<dbReference type="SMR" id="C5B9D0"/>
<dbReference type="STRING" id="67780.B6E78_11410"/>
<dbReference type="GeneID" id="69537160"/>
<dbReference type="KEGG" id="eic:NT01EI_0050"/>
<dbReference type="PATRIC" id="fig|634503.3.peg.43"/>
<dbReference type="HOGENOM" id="CLU_074878_0_1_6"/>
<dbReference type="OrthoDB" id="9779060at2"/>
<dbReference type="UniPathway" id="UPA00070">
    <property type="reaction ID" value="UER00119"/>
</dbReference>
<dbReference type="Proteomes" id="UP000001485">
    <property type="component" value="Chromosome"/>
</dbReference>
<dbReference type="GO" id="GO:0005737">
    <property type="term" value="C:cytoplasm"/>
    <property type="evidence" value="ECO:0007669"/>
    <property type="project" value="TreeGrafter"/>
</dbReference>
<dbReference type="GO" id="GO:0000287">
    <property type="term" value="F:magnesium ion binding"/>
    <property type="evidence" value="ECO:0007669"/>
    <property type="project" value="UniProtKB-UniRule"/>
</dbReference>
<dbReference type="GO" id="GO:0004588">
    <property type="term" value="F:orotate phosphoribosyltransferase activity"/>
    <property type="evidence" value="ECO:0007669"/>
    <property type="project" value="UniProtKB-UniRule"/>
</dbReference>
<dbReference type="GO" id="GO:0006207">
    <property type="term" value="P:'de novo' pyrimidine nucleobase biosynthetic process"/>
    <property type="evidence" value="ECO:0007669"/>
    <property type="project" value="TreeGrafter"/>
</dbReference>
<dbReference type="GO" id="GO:0044205">
    <property type="term" value="P:'de novo' UMP biosynthetic process"/>
    <property type="evidence" value="ECO:0007669"/>
    <property type="project" value="UniProtKB-UniRule"/>
</dbReference>
<dbReference type="GO" id="GO:0046132">
    <property type="term" value="P:pyrimidine ribonucleoside biosynthetic process"/>
    <property type="evidence" value="ECO:0007669"/>
    <property type="project" value="TreeGrafter"/>
</dbReference>
<dbReference type="CDD" id="cd06223">
    <property type="entry name" value="PRTases_typeI"/>
    <property type="match status" value="1"/>
</dbReference>
<dbReference type="FunFam" id="3.40.50.2020:FF:000008">
    <property type="entry name" value="Orotate phosphoribosyltransferase"/>
    <property type="match status" value="1"/>
</dbReference>
<dbReference type="Gene3D" id="3.40.50.2020">
    <property type="match status" value="1"/>
</dbReference>
<dbReference type="HAMAP" id="MF_01208">
    <property type="entry name" value="PyrE"/>
    <property type="match status" value="1"/>
</dbReference>
<dbReference type="InterPro" id="IPR023031">
    <property type="entry name" value="OPRT"/>
</dbReference>
<dbReference type="InterPro" id="IPR004467">
    <property type="entry name" value="Or_phspho_trans_dom"/>
</dbReference>
<dbReference type="InterPro" id="IPR000836">
    <property type="entry name" value="PRibTrfase_dom"/>
</dbReference>
<dbReference type="InterPro" id="IPR029057">
    <property type="entry name" value="PRTase-like"/>
</dbReference>
<dbReference type="NCBIfam" id="TIGR00336">
    <property type="entry name" value="pyrE"/>
    <property type="match status" value="1"/>
</dbReference>
<dbReference type="PANTHER" id="PTHR46683">
    <property type="entry name" value="OROTATE PHOSPHORIBOSYLTRANSFERASE 1-RELATED"/>
    <property type="match status" value="1"/>
</dbReference>
<dbReference type="PANTHER" id="PTHR46683:SF1">
    <property type="entry name" value="OROTATE PHOSPHORIBOSYLTRANSFERASE 1-RELATED"/>
    <property type="match status" value="1"/>
</dbReference>
<dbReference type="Pfam" id="PF00156">
    <property type="entry name" value="Pribosyltran"/>
    <property type="match status" value="1"/>
</dbReference>
<dbReference type="SUPFAM" id="SSF53271">
    <property type="entry name" value="PRTase-like"/>
    <property type="match status" value="1"/>
</dbReference>
<dbReference type="PROSITE" id="PS00103">
    <property type="entry name" value="PUR_PYR_PR_TRANSFER"/>
    <property type="match status" value="1"/>
</dbReference>
<sequence>MKAYQRRFIEFALGKQVLKFGEFTLKSGRTSPYFFNAGLFNTGRDLALLGRFYAEALVESGIAFDVLFGPAYKGIPIATTTAVALAEHHDRDMPYCFNRKEAKDHGEGGTLVGSALAGRVMLVDDVITAGTAIRESMSIIQANGAALAGVLISLDRQERGRGELSAIQEVERDYGCRVISIITLGDLIHYLEEQPEMAQHLAAVKAYRARYGV</sequence>